<organism>
    <name type="scientific">Sulfurovum sp. (strain NBC37-1)</name>
    <dbReference type="NCBI Taxonomy" id="387093"/>
    <lineage>
        <taxon>Bacteria</taxon>
        <taxon>Pseudomonadati</taxon>
        <taxon>Campylobacterota</taxon>
        <taxon>Epsilonproteobacteria</taxon>
        <taxon>Campylobacterales</taxon>
        <taxon>Sulfurovaceae</taxon>
        <taxon>Sulfurovum</taxon>
    </lineage>
</organism>
<feature type="chain" id="PRO_0000368821" description="ATP synthase subunit b">
    <location>
        <begin position="1"/>
        <end position="187"/>
    </location>
</feature>
<feature type="transmembrane region" description="Helical" evidence="1">
    <location>
        <begin position="4"/>
        <end position="24"/>
    </location>
</feature>
<name>ATPF_SULNB</name>
<reference key="1">
    <citation type="journal article" date="2007" name="Proc. Natl. Acad. Sci. U.S.A.">
        <title>Deep-sea vent epsilon-proteobacterial genomes provide insights into emergence of pathogens.</title>
        <authorList>
            <person name="Nakagawa S."/>
            <person name="Takaki Y."/>
            <person name="Shimamura S."/>
            <person name="Reysenbach A.-L."/>
            <person name="Takai K."/>
            <person name="Horikoshi K."/>
        </authorList>
    </citation>
    <scope>NUCLEOTIDE SEQUENCE [LARGE SCALE GENOMIC DNA]</scope>
    <source>
        <strain>NBC37-1</strain>
    </source>
</reference>
<evidence type="ECO:0000255" key="1">
    <source>
        <dbReference type="HAMAP-Rule" id="MF_01398"/>
    </source>
</evidence>
<dbReference type="EMBL" id="AP009179">
    <property type="protein sequence ID" value="BAF72722.1"/>
    <property type="molecule type" value="Genomic_DNA"/>
</dbReference>
<dbReference type="RefSeq" id="WP_012083532.1">
    <property type="nucleotide sequence ID" value="NC_009663.1"/>
</dbReference>
<dbReference type="SMR" id="A6QB63"/>
<dbReference type="STRING" id="387093.SUN_1775"/>
<dbReference type="KEGG" id="sun:SUN_1775"/>
<dbReference type="eggNOG" id="COG0711">
    <property type="taxonomic scope" value="Bacteria"/>
</dbReference>
<dbReference type="HOGENOM" id="CLU_129781_0_0_7"/>
<dbReference type="OrthoDB" id="5373033at2"/>
<dbReference type="Proteomes" id="UP000006378">
    <property type="component" value="Chromosome"/>
</dbReference>
<dbReference type="GO" id="GO:0005886">
    <property type="term" value="C:plasma membrane"/>
    <property type="evidence" value="ECO:0007669"/>
    <property type="project" value="UniProtKB-SubCell"/>
</dbReference>
<dbReference type="GO" id="GO:0045259">
    <property type="term" value="C:proton-transporting ATP synthase complex"/>
    <property type="evidence" value="ECO:0007669"/>
    <property type="project" value="UniProtKB-KW"/>
</dbReference>
<dbReference type="GO" id="GO:0046933">
    <property type="term" value="F:proton-transporting ATP synthase activity, rotational mechanism"/>
    <property type="evidence" value="ECO:0007669"/>
    <property type="project" value="UniProtKB-UniRule"/>
</dbReference>
<dbReference type="GO" id="GO:0046961">
    <property type="term" value="F:proton-transporting ATPase activity, rotational mechanism"/>
    <property type="evidence" value="ECO:0007669"/>
    <property type="project" value="TreeGrafter"/>
</dbReference>
<dbReference type="CDD" id="cd06503">
    <property type="entry name" value="ATP-synt_Fo_b"/>
    <property type="match status" value="1"/>
</dbReference>
<dbReference type="HAMAP" id="MF_01398">
    <property type="entry name" value="ATP_synth_b_bprime"/>
    <property type="match status" value="1"/>
</dbReference>
<dbReference type="InterPro" id="IPR002146">
    <property type="entry name" value="ATP_synth_b/b'su_bac/chlpt"/>
</dbReference>
<dbReference type="InterPro" id="IPR050059">
    <property type="entry name" value="ATP_synthase_B_chain"/>
</dbReference>
<dbReference type="PANTHER" id="PTHR33445">
    <property type="entry name" value="ATP SYNTHASE SUBUNIT B', CHLOROPLASTIC"/>
    <property type="match status" value="1"/>
</dbReference>
<dbReference type="PANTHER" id="PTHR33445:SF2">
    <property type="entry name" value="ATP SYNTHASE SUBUNIT B', CHLOROPLASTIC"/>
    <property type="match status" value="1"/>
</dbReference>
<dbReference type="Pfam" id="PF00430">
    <property type="entry name" value="ATP-synt_B"/>
    <property type="match status" value="1"/>
</dbReference>
<gene>
    <name evidence="1" type="primary">atpF</name>
    <name type="ordered locus">SUN_1775</name>
</gene>
<comment type="function">
    <text evidence="1">F(1)F(0) ATP synthase produces ATP from ADP in the presence of a proton or sodium gradient. F-type ATPases consist of two structural domains, F(1) containing the extramembraneous catalytic core and F(0) containing the membrane proton channel, linked together by a central stalk and a peripheral stalk. During catalysis, ATP synthesis in the catalytic domain of F(1) is coupled via a rotary mechanism of the central stalk subunits to proton translocation.</text>
</comment>
<comment type="function">
    <text evidence="1">Component of the F(0) channel, it forms part of the peripheral stalk, linking F(1) to F(0).</text>
</comment>
<comment type="subunit">
    <text evidence="1">F-type ATPases have 2 components, F(1) - the catalytic core - and F(0) - the membrane proton channel. F(1) has five subunits: alpha(3), beta(3), gamma(1), delta(1), epsilon(1). F(0) has three main subunits: a(1), b(2) and c(10-14). The alpha and beta chains form an alternating ring which encloses part of the gamma chain. F(1) is attached to F(0) by a central stalk formed by the gamma and epsilon chains, while a peripheral stalk is formed by the delta and b chains.</text>
</comment>
<comment type="subcellular location">
    <subcellularLocation>
        <location evidence="1">Cell inner membrane</location>
        <topology evidence="1">Single-pass membrane protein</topology>
    </subcellularLocation>
</comment>
<comment type="similarity">
    <text evidence="1">Belongs to the ATPase B chain family.</text>
</comment>
<protein>
    <recommendedName>
        <fullName evidence="1">ATP synthase subunit b</fullName>
    </recommendedName>
    <alternativeName>
        <fullName evidence="1">ATP synthase F(0) sector subunit b</fullName>
    </alternativeName>
    <alternativeName>
        <fullName evidence="1">ATPase subunit I</fullName>
    </alternativeName>
    <alternativeName>
        <fullName evidence="1">F-type ATPase subunit b</fullName>
        <shortName evidence="1">F-ATPase subunit b</shortName>
    </alternativeName>
</protein>
<sequence>MKKLALFALLMVPAILLASGHDSGEASRYLTQTGRESDFWPRVINFTIFAAILYYLIANPIKNFFKGRREGIAGQLKEIESKLQAAKDEKKEAQSHLNESVNKAAEIIEDAKKEAEILAAKIAEASENELVVLEKQFEEKITLEERKAARDVIDEVLSENITTDDIALDETKVVDIISRKAEHGKVA</sequence>
<keyword id="KW-0066">ATP synthesis</keyword>
<keyword id="KW-0997">Cell inner membrane</keyword>
<keyword id="KW-1003">Cell membrane</keyword>
<keyword id="KW-0138">CF(0)</keyword>
<keyword id="KW-0375">Hydrogen ion transport</keyword>
<keyword id="KW-0406">Ion transport</keyword>
<keyword id="KW-0472">Membrane</keyword>
<keyword id="KW-0812">Transmembrane</keyword>
<keyword id="KW-1133">Transmembrane helix</keyword>
<keyword id="KW-0813">Transport</keyword>
<accession>A6QB63</accession>
<proteinExistence type="inferred from homology"/>